<organism>
    <name type="scientific">Mus musculus</name>
    <name type="common">Mouse</name>
    <dbReference type="NCBI Taxonomy" id="10090"/>
    <lineage>
        <taxon>Eukaryota</taxon>
        <taxon>Metazoa</taxon>
        <taxon>Chordata</taxon>
        <taxon>Craniata</taxon>
        <taxon>Vertebrata</taxon>
        <taxon>Euteleostomi</taxon>
        <taxon>Mammalia</taxon>
        <taxon>Eutheria</taxon>
        <taxon>Euarchontoglires</taxon>
        <taxon>Glires</taxon>
        <taxon>Rodentia</taxon>
        <taxon>Myomorpha</taxon>
        <taxon>Muroidea</taxon>
        <taxon>Muridae</taxon>
        <taxon>Murinae</taxon>
        <taxon>Mus</taxon>
        <taxon>Mus</taxon>
    </lineage>
</organism>
<comment type="function">
    <text evidence="1 5">Plays a key role in both adaptive and innate immune signaling by bridging CARD domain-containing proteins to immune activation (PubMed:22265677). Acts by channeling adaptive and innate immune signaling downstream of CARD domain-containing proteins CARD9, CARD11 and CARD14 to activate NF-kappa-B and MAP kinase p38 (MAPK11, MAPK12, MAPK13 and/or MAPK14) pathways which stimulate expression of genes encoding pro-inflammatory cytokines and chemokines (PubMed:22265677). Recruited by activated CARD domain-containing proteins: homooligomerized CARD domain-containing proteins form a nucleating helical template that recruits BCL10 via CARD-CARD interaction, thereby promoting polymerization of BCL10, subsequent recruitment of MALT1 and formation of a CBM complex (By similarity). This leads to activation of NF-kappa-B and MAP kinase p38 (MAPK11, MAPK12, MAPK13 and/or MAPK14) pathways which stimulate expression of genes encoding pro-inflammatory cytokines and chemokines (By similarity). Activated by CARD9 downstream of C-type lectin receptors; CARD9-mediated signals are essential for antifungal immunity (PubMed:22265677). Activated by CARD11 downstream of T-cell receptor (TCR) and B-cell receptor (BCR) (By similarity). Promotes apoptosis, pro-caspase-9 maturation and activation of NF-kappa-B via NIK and IKK (By similarity).</text>
</comment>
<comment type="subunit">
    <text evidence="1 4 5 6">Homomultimer; homooligomerized following recruitment by CARD domain-containing proteins that form a nucleating helical template that recruits BCL10 via CARD-CARD interaction (By similarity). Self-associates by CARD-CARD interaction and interacts with other CARD-proteins such as CARD9, CARD10, CARD11 and CARD14 (PubMed:22265677, PubMed:22880103). Forms a complex with CARD14 and MALT1; resulting in the formation of a CBM (CARD14-BCL10-MALT1) complex (By similarity). Forms a complex with CARD11 and MALT1; resulting in the formation of a CBM (CARD11-BCL10-MALT1) complex (By similarity). Forms a complex with CARD9 and MALT1; resulting in the formation of a CBM (CARD9-BCL10-MALT1) complex (PubMed:22265677). Found in a membrane raft complex, at least composed of BCL10, CARD11, DPP4 and IKBKB (By similarity). Binds caspase-9 with its C-terminal domain (By similarity). Interacts with TRAF2 and BIRC2/c-IAP2 (By similarity). Interacts with PELI2 and SOCS3; these interactions may be mutually exclusive (PubMed:15213237).</text>
</comment>
<comment type="interaction">
    <interactant intactId="EBI-8545413">
        <id>Q9Z0H7</id>
    </interactant>
    <interactant intactId="EBI-11709474">
        <id>Q66677</id>
        <label>E10</label>
    </interactant>
    <organismsDiffer>true</organismsDiffer>
    <experiments>3</experiments>
</comment>
<comment type="subcellular location">
    <subcellularLocation>
        <location evidence="1">Cytoplasm</location>
    </subcellularLocation>
    <subcellularLocation>
        <location evidence="1">Membrane raft</location>
    </subcellularLocation>
    <text evidence="1">Colocalized with DPP4 in membrane rafts.</text>
</comment>
<comment type="tissue specificity">
    <text>Highly expressed in heart, brain, spleen, lung, liver, skeletal muscle, kidney and testis. Detected in developing brain, olfactory epithelium, tongue, whisker follicles, salivary gland, heart, lung, liver and intestinal epithelia of stage 15 embryos.</text>
</comment>
<comment type="PTM">
    <text evidence="1">Phosphorylated by IKBKB/IKKB.</text>
</comment>
<comment type="PTM">
    <text evidence="1">Ubiquitinated via both 'Lys-63'-linked and linear ('Met-1'-linked) polyubiquitin chains in response to T-cell receptor (TCR) activation. Ubiquitination is recognized by IKBKG/NEMO, the regulatory subunit of I-kappa-B kinase (IKK), and is required for TCR-induced NF-kappa-B activation. Linear ubiquitination at Lys-17, Lys-31 and Lys-63 is mediated by RNF31/HOIP; linear ubiquitination is recognized with much higher affinity than 'Lys-63'-linked ubiquitin by IKBKG/NEMO. CARD11 is required for linear ubiquitination by HOIP by promoting the targeting of BCL10 to RNF31/HOIP.</text>
</comment>
<comment type="PTM">
    <text evidence="1">Proteolytically cleaved by MALT1; required for T-cell activation.</text>
</comment>
<protein>
    <recommendedName>
        <fullName>B-cell lymphoma/leukemia 10</fullName>
    </recommendedName>
    <alternativeName>
        <fullName>B-cell CLL/lymphoma 10</fullName>
        <shortName>Bcl-10</shortName>
    </alternativeName>
    <alternativeName>
        <fullName>CARD-containing molecule enhancing NF-kappa-B</fullName>
    </alternativeName>
    <alternativeName>
        <fullName evidence="9">CARD-like apoptotic protein</fullName>
        <shortName evidence="9">mCLAP</shortName>
    </alternativeName>
    <alternativeName>
        <fullName evidence="7">CED-3/ICH-1 prodomain homologous E10-like regulator</fullName>
        <shortName evidence="7">mCIPER</shortName>
    </alternativeName>
    <alternativeName>
        <fullName>Cellular homolog of vCARMEN</fullName>
        <shortName>cCARMEN</shortName>
    </alternativeName>
    <alternativeName>
        <fullName>Cellular-E10</fullName>
        <shortName>c-E10</shortName>
    </alternativeName>
    <alternativeName>
        <fullName evidence="8">Mammalian CARD-containing adapter molecule E10</fullName>
        <shortName evidence="8">mE10</shortName>
    </alternativeName>
</protein>
<dbReference type="EMBL" id="AJ006289">
    <property type="protein sequence ID" value="CAA06956.1"/>
    <property type="molecule type" value="mRNA"/>
</dbReference>
<dbReference type="EMBL" id="AF057701">
    <property type="protein sequence ID" value="AAD15801.1"/>
    <property type="molecule type" value="mRNA"/>
</dbReference>
<dbReference type="EMBL" id="AF100339">
    <property type="protein sequence ID" value="AAD16429.1"/>
    <property type="molecule type" value="mRNA"/>
</dbReference>
<dbReference type="EMBL" id="AF127387">
    <property type="protein sequence ID" value="AAD32598.1"/>
    <property type="molecule type" value="mRNA"/>
</dbReference>
<dbReference type="EMBL" id="AF134396">
    <property type="protein sequence ID" value="AAD39148.1"/>
    <property type="molecule type" value="mRNA"/>
</dbReference>
<dbReference type="EMBL" id="AK076082">
    <property type="protein sequence ID" value="BAC36168.1"/>
    <property type="molecule type" value="mRNA"/>
</dbReference>
<dbReference type="EMBL" id="AK140179">
    <property type="protein sequence ID" value="BAE24267.1"/>
    <property type="molecule type" value="mRNA"/>
</dbReference>
<dbReference type="EMBL" id="AK150883">
    <property type="protein sequence ID" value="BAE29930.1"/>
    <property type="molecule type" value="mRNA"/>
</dbReference>
<dbReference type="EMBL" id="AK152563">
    <property type="protein sequence ID" value="BAE31316.1"/>
    <property type="molecule type" value="mRNA"/>
</dbReference>
<dbReference type="EMBL" id="AK152847">
    <property type="protein sequence ID" value="BAE31540.1"/>
    <property type="molecule type" value="mRNA"/>
</dbReference>
<dbReference type="EMBL" id="AK156890">
    <property type="protein sequence ID" value="BAE33885.1"/>
    <property type="molecule type" value="mRNA"/>
</dbReference>
<dbReference type="EMBL" id="AK169126">
    <property type="protein sequence ID" value="BAE40905.1"/>
    <property type="molecule type" value="mRNA"/>
</dbReference>
<dbReference type="EMBL" id="AK172158">
    <property type="protein sequence ID" value="BAE42852.1"/>
    <property type="molecule type" value="mRNA"/>
</dbReference>
<dbReference type="EMBL" id="BC024379">
    <property type="protein sequence ID" value="AAH24379.1"/>
    <property type="molecule type" value="mRNA"/>
</dbReference>
<dbReference type="CCDS" id="CCDS17897.1"/>
<dbReference type="RefSeq" id="NP_033870.1">
    <property type="nucleotide sequence ID" value="NM_009740.2"/>
</dbReference>
<dbReference type="SMR" id="Q9Z0H7"/>
<dbReference type="BioGRID" id="198317">
    <property type="interactions" value="14"/>
</dbReference>
<dbReference type="CORUM" id="Q9Z0H7"/>
<dbReference type="DIP" id="DIP-60309N"/>
<dbReference type="FunCoup" id="Q9Z0H7">
    <property type="interactions" value="1782"/>
</dbReference>
<dbReference type="IntAct" id="Q9Z0H7">
    <property type="interactions" value="4"/>
</dbReference>
<dbReference type="MINT" id="Q9Z0H7"/>
<dbReference type="STRING" id="10090.ENSMUSP00000029842"/>
<dbReference type="GlyGen" id="Q9Z0H7">
    <property type="glycosylation" value="1 site, 1 O-linked glycan (1 site)"/>
</dbReference>
<dbReference type="iPTMnet" id="Q9Z0H7"/>
<dbReference type="PhosphoSitePlus" id="Q9Z0H7"/>
<dbReference type="PaxDb" id="10090-ENSMUSP00000029842"/>
<dbReference type="ProteomicsDB" id="273478"/>
<dbReference type="Pumba" id="Q9Z0H7"/>
<dbReference type="Antibodypedia" id="4526">
    <property type="antibodies" value="1342 antibodies from 47 providers"/>
</dbReference>
<dbReference type="DNASU" id="12042"/>
<dbReference type="Ensembl" id="ENSMUST00000029842.9">
    <property type="protein sequence ID" value="ENSMUSP00000029842.8"/>
    <property type="gene ID" value="ENSMUSG00000028191.12"/>
</dbReference>
<dbReference type="GeneID" id="12042"/>
<dbReference type="KEGG" id="mmu:12042"/>
<dbReference type="UCSC" id="uc008rqs.2">
    <property type="organism name" value="mouse"/>
</dbReference>
<dbReference type="AGR" id="MGI:1337994"/>
<dbReference type="CTD" id="8915"/>
<dbReference type="MGI" id="MGI:1337994">
    <property type="gene designation" value="Bcl10"/>
</dbReference>
<dbReference type="VEuPathDB" id="HostDB:ENSMUSG00000028191"/>
<dbReference type="eggNOG" id="ENOG502RXGH">
    <property type="taxonomic scope" value="Eukaryota"/>
</dbReference>
<dbReference type="GeneTree" id="ENSGT00490000043442"/>
<dbReference type="HOGENOM" id="CLU_103803_0_0_1"/>
<dbReference type="InParanoid" id="Q9Z0H7"/>
<dbReference type="OMA" id="HPDGEQS"/>
<dbReference type="OrthoDB" id="5984934at2759"/>
<dbReference type="PhylomeDB" id="Q9Z0H7"/>
<dbReference type="TreeFam" id="TF328636"/>
<dbReference type="Reactome" id="R-MMU-1169091">
    <property type="pathway name" value="Activation of NF-kappaB in B cells"/>
</dbReference>
<dbReference type="Reactome" id="R-MMU-202424">
    <property type="pathway name" value="Downstream TCR signaling"/>
</dbReference>
<dbReference type="Reactome" id="R-MMU-2871837">
    <property type="pathway name" value="FCERI mediated NF-kB activation"/>
</dbReference>
<dbReference type="Reactome" id="R-MMU-5607764">
    <property type="pathway name" value="CLEC7A (Dectin-1) signaling"/>
</dbReference>
<dbReference type="Reactome" id="R-MMU-8866654">
    <property type="pathway name" value="E3 ubiquitin ligases ubiquitinate target proteins"/>
</dbReference>
<dbReference type="BioGRID-ORCS" id="12042">
    <property type="hits" value="4 hits in 81 CRISPR screens"/>
</dbReference>
<dbReference type="ChiTaRS" id="Bcl10">
    <property type="organism name" value="mouse"/>
</dbReference>
<dbReference type="PRO" id="PR:Q9Z0H7"/>
<dbReference type="Proteomes" id="UP000000589">
    <property type="component" value="Chromosome 3"/>
</dbReference>
<dbReference type="RNAct" id="Q9Z0H7">
    <property type="molecule type" value="protein"/>
</dbReference>
<dbReference type="Bgee" id="ENSMUSG00000028191">
    <property type="expression patterns" value="Expressed in saccule of membranous labyrinth and 266 other cell types or tissues"/>
</dbReference>
<dbReference type="ExpressionAtlas" id="Q9Z0H7">
    <property type="expression patterns" value="baseline and differential"/>
</dbReference>
<dbReference type="GO" id="GO:0032449">
    <property type="term" value="C:CBM complex"/>
    <property type="evidence" value="ECO:0000314"/>
    <property type="project" value="UniProtKB"/>
</dbReference>
<dbReference type="GO" id="GO:0005737">
    <property type="term" value="C:cytoplasm"/>
    <property type="evidence" value="ECO:0000314"/>
    <property type="project" value="MGI"/>
</dbReference>
<dbReference type="GO" id="GO:0005881">
    <property type="term" value="C:cytoplasmic microtubule"/>
    <property type="evidence" value="ECO:0000250"/>
    <property type="project" value="UniProtKB"/>
</dbReference>
<dbReference type="GO" id="GO:0005829">
    <property type="term" value="C:cytosol"/>
    <property type="evidence" value="ECO:0000314"/>
    <property type="project" value="UniProtKB"/>
</dbReference>
<dbReference type="GO" id="GO:0001772">
    <property type="term" value="C:immunological synapse"/>
    <property type="evidence" value="ECO:0000314"/>
    <property type="project" value="MGI"/>
</dbReference>
<dbReference type="GO" id="GO:0005764">
    <property type="term" value="C:lysosome"/>
    <property type="evidence" value="ECO:0000250"/>
    <property type="project" value="UniProtKB"/>
</dbReference>
<dbReference type="GO" id="GO:0045121">
    <property type="term" value="C:membrane raft"/>
    <property type="evidence" value="ECO:0000314"/>
    <property type="project" value="MGI"/>
</dbReference>
<dbReference type="GO" id="GO:0005654">
    <property type="term" value="C:nucleoplasm"/>
    <property type="evidence" value="ECO:0007669"/>
    <property type="project" value="Ensembl"/>
</dbReference>
<dbReference type="GO" id="GO:0005634">
    <property type="term" value="C:nucleus"/>
    <property type="evidence" value="ECO:0000250"/>
    <property type="project" value="UniProtKB"/>
</dbReference>
<dbReference type="GO" id="GO:0048471">
    <property type="term" value="C:perinuclear region of cytoplasm"/>
    <property type="evidence" value="ECO:0000250"/>
    <property type="project" value="UniProtKB"/>
</dbReference>
<dbReference type="GO" id="GO:0002096">
    <property type="term" value="C:polkadots"/>
    <property type="evidence" value="ECO:0000314"/>
    <property type="project" value="CACAO"/>
</dbReference>
<dbReference type="GO" id="GO:0032991">
    <property type="term" value="C:protein-containing complex"/>
    <property type="evidence" value="ECO:0000250"/>
    <property type="project" value="UniProtKB"/>
</dbReference>
<dbReference type="GO" id="GO:0050700">
    <property type="term" value="F:CARD domain binding"/>
    <property type="evidence" value="ECO:0000353"/>
    <property type="project" value="UniProtKB"/>
</dbReference>
<dbReference type="GO" id="GO:0008656">
    <property type="term" value="F:cysteine-type endopeptidase activator activity involved in apoptotic process"/>
    <property type="evidence" value="ECO:0000266"/>
    <property type="project" value="MGI"/>
</dbReference>
<dbReference type="GO" id="GO:0140296">
    <property type="term" value="F:general transcription initiation factor binding"/>
    <property type="evidence" value="ECO:0000250"/>
    <property type="project" value="UniProtKB"/>
</dbReference>
<dbReference type="GO" id="GO:0042802">
    <property type="term" value="F:identical protein binding"/>
    <property type="evidence" value="ECO:0000353"/>
    <property type="project" value="UniProtKB"/>
</dbReference>
<dbReference type="GO" id="GO:0019209">
    <property type="term" value="F:kinase activator activity"/>
    <property type="evidence" value="ECO:0007669"/>
    <property type="project" value="Ensembl"/>
</dbReference>
<dbReference type="GO" id="GO:0051059">
    <property type="term" value="F:NF-kappaB binding"/>
    <property type="evidence" value="ECO:0000250"/>
    <property type="project" value="UniProtKB"/>
</dbReference>
<dbReference type="GO" id="GO:0002020">
    <property type="term" value="F:protease binding"/>
    <property type="evidence" value="ECO:0007669"/>
    <property type="project" value="Ensembl"/>
</dbReference>
<dbReference type="GO" id="GO:0046982">
    <property type="term" value="F:protein heterodimerization activity"/>
    <property type="evidence" value="ECO:0000266"/>
    <property type="project" value="MGI"/>
</dbReference>
<dbReference type="GO" id="GO:0042803">
    <property type="term" value="F:protein homodimerization activity"/>
    <property type="evidence" value="ECO:0000266"/>
    <property type="project" value="MGI"/>
</dbReference>
<dbReference type="GO" id="GO:0043422">
    <property type="term" value="F:protein kinase B binding"/>
    <property type="evidence" value="ECO:0000250"/>
    <property type="project" value="UniProtKB"/>
</dbReference>
<dbReference type="GO" id="GO:0044877">
    <property type="term" value="F:protein-containing complex binding"/>
    <property type="evidence" value="ECO:0007669"/>
    <property type="project" value="Ensembl"/>
</dbReference>
<dbReference type="GO" id="GO:0035591">
    <property type="term" value="F:signaling adaptor activity"/>
    <property type="evidence" value="ECO:0000314"/>
    <property type="project" value="UniProt"/>
</dbReference>
<dbReference type="GO" id="GO:0003713">
    <property type="term" value="F:transcription coactivator activity"/>
    <property type="evidence" value="ECO:0000250"/>
    <property type="project" value="UniProtKB"/>
</dbReference>
<dbReference type="GO" id="GO:0031625">
    <property type="term" value="F:ubiquitin protein ligase binding"/>
    <property type="evidence" value="ECO:0000250"/>
    <property type="project" value="UniProtKB"/>
</dbReference>
<dbReference type="GO" id="GO:0002250">
    <property type="term" value="P:adaptive immune response"/>
    <property type="evidence" value="ECO:0000250"/>
    <property type="project" value="UniProtKB"/>
</dbReference>
<dbReference type="GO" id="GO:0061760">
    <property type="term" value="P:antifungal innate immune response"/>
    <property type="evidence" value="ECO:0000314"/>
    <property type="project" value="UniProtKB"/>
</dbReference>
<dbReference type="GO" id="GO:0097190">
    <property type="term" value="P:apoptotic signaling pathway"/>
    <property type="evidence" value="ECO:0007669"/>
    <property type="project" value="Ensembl"/>
</dbReference>
<dbReference type="GO" id="GO:0001783">
    <property type="term" value="P:B cell apoptotic process"/>
    <property type="evidence" value="ECO:0000314"/>
    <property type="project" value="MGI"/>
</dbReference>
<dbReference type="GO" id="GO:0006968">
    <property type="term" value="P:cellular defense response"/>
    <property type="evidence" value="ECO:0000315"/>
    <property type="project" value="MGI"/>
</dbReference>
<dbReference type="GO" id="GO:0071222">
    <property type="term" value="P:cellular response to lipopolysaccharide"/>
    <property type="evidence" value="ECO:0000250"/>
    <property type="project" value="UniProtKB"/>
</dbReference>
<dbReference type="GO" id="GO:0071260">
    <property type="term" value="P:cellular response to mechanical stimulus"/>
    <property type="evidence" value="ECO:0007669"/>
    <property type="project" value="Ensembl"/>
</dbReference>
<dbReference type="GO" id="GO:0016064">
    <property type="term" value="P:immunoglobulin mediated immune response"/>
    <property type="evidence" value="ECO:0000315"/>
    <property type="project" value="MGI"/>
</dbReference>
<dbReference type="GO" id="GO:0045087">
    <property type="term" value="P:innate immune response"/>
    <property type="evidence" value="ECO:0000250"/>
    <property type="project" value="UniProtKB"/>
</dbReference>
<dbReference type="GO" id="GO:0031663">
    <property type="term" value="P:lipopolysaccharide-mediated signaling pathway"/>
    <property type="evidence" value="ECO:0000250"/>
    <property type="project" value="UniProtKB"/>
</dbReference>
<dbReference type="GO" id="GO:0045576">
    <property type="term" value="P:mast cell activation"/>
    <property type="evidence" value="ECO:0000303"/>
    <property type="project" value="UniProtKB"/>
</dbReference>
<dbReference type="GO" id="GO:0002906">
    <property type="term" value="P:negative regulation of mature B cell apoptotic process"/>
    <property type="evidence" value="ECO:0000250"/>
    <property type="project" value="UniProtKB"/>
</dbReference>
<dbReference type="GO" id="GO:0001843">
    <property type="term" value="P:neural tube closure"/>
    <property type="evidence" value="ECO:0000315"/>
    <property type="project" value="UniProtKB"/>
</dbReference>
<dbReference type="GO" id="GO:0038061">
    <property type="term" value="P:non-canonical NF-kappaB signal transduction"/>
    <property type="evidence" value="ECO:0000315"/>
    <property type="project" value="MGI"/>
</dbReference>
<dbReference type="GO" id="GO:0043065">
    <property type="term" value="P:positive regulation of apoptotic process"/>
    <property type="evidence" value="ECO:0000266"/>
    <property type="project" value="MGI"/>
</dbReference>
<dbReference type="GO" id="GO:0043123">
    <property type="term" value="P:positive regulation of canonical NF-kappaB signal transduction"/>
    <property type="evidence" value="ECO:0000250"/>
    <property type="project" value="UniProtKB"/>
</dbReference>
<dbReference type="GO" id="GO:0001819">
    <property type="term" value="P:positive regulation of cytokine production"/>
    <property type="evidence" value="ECO:0000314"/>
    <property type="project" value="UniProtKB"/>
</dbReference>
<dbReference type="GO" id="GO:0045893">
    <property type="term" value="P:positive regulation of DNA-templated transcription"/>
    <property type="evidence" value="ECO:0000250"/>
    <property type="project" value="UniProtKB"/>
</dbReference>
<dbReference type="GO" id="GO:1900119">
    <property type="term" value="P:positive regulation of execution phase of apoptosis"/>
    <property type="evidence" value="ECO:0000266"/>
    <property type="project" value="MGI"/>
</dbReference>
<dbReference type="GO" id="GO:2001238">
    <property type="term" value="P:positive regulation of extrinsic apoptotic signaling pathway"/>
    <property type="evidence" value="ECO:0000314"/>
    <property type="project" value="MGI"/>
</dbReference>
<dbReference type="GO" id="GO:0032757">
    <property type="term" value="P:positive regulation of interleukin-8 production"/>
    <property type="evidence" value="ECO:0000250"/>
    <property type="project" value="UniProtKB"/>
</dbReference>
<dbReference type="GO" id="GO:0051092">
    <property type="term" value="P:positive regulation of NF-kappaB transcription factor activity"/>
    <property type="evidence" value="ECO:0000314"/>
    <property type="project" value="UniProtKB"/>
</dbReference>
<dbReference type="GO" id="GO:0042327">
    <property type="term" value="P:positive regulation of phosphorylation"/>
    <property type="evidence" value="ECO:0000250"/>
    <property type="project" value="UniProtKB"/>
</dbReference>
<dbReference type="GO" id="GO:0031398">
    <property type="term" value="P:positive regulation of protein ubiquitination"/>
    <property type="evidence" value="ECO:0000250"/>
    <property type="project" value="UniProtKB"/>
</dbReference>
<dbReference type="GO" id="GO:0050870">
    <property type="term" value="P:positive regulation of T cell activation"/>
    <property type="evidence" value="ECO:0000315"/>
    <property type="project" value="MGI"/>
</dbReference>
<dbReference type="GO" id="GO:0050862">
    <property type="term" value="P:positive regulation of T cell receptor signaling pathway"/>
    <property type="evidence" value="ECO:0000250"/>
    <property type="project" value="UniProtKB"/>
</dbReference>
<dbReference type="GO" id="GO:0012501">
    <property type="term" value="P:programmed cell death"/>
    <property type="evidence" value="ECO:0000250"/>
    <property type="project" value="UniProtKB"/>
</dbReference>
<dbReference type="GO" id="GO:0051260">
    <property type="term" value="P:protein homooligomerization"/>
    <property type="evidence" value="ECO:0000250"/>
    <property type="project" value="UniProtKB"/>
</dbReference>
<dbReference type="GO" id="GO:0050856">
    <property type="term" value="P:regulation of T cell receptor signaling pathway"/>
    <property type="evidence" value="ECO:0000315"/>
    <property type="project" value="MGI"/>
</dbReference>
<dbReference type="GO" id="GO:0032094">
    <property type="term" value="P:response to food"/>
    <property type="evidence" value="ECO:0000250"/>
    <property type="project" value="UniProtKB"/>
</dbReference>
<dbReference type="GO" id="GO:0009620">
    <property type="term" value="P:response to fungus"/>
    <property type="evidence" value="ECO:0000315"/>
    <property type="project" value="MGI"/>
</dbReference>
<dbReference type="GO" id="GO:0032496">
    <property type="term" value="P:response to lipopolysaccharide"/>
    <property type="evidence" value="ECO:0000314"/>
    <property type="project" value="UniProt"/>
</dbReference>
<dbReference type="GO" id="GO:0070231">
    <property type="term" value="P:T cell apoptotic process"/>
    <property type="evidence" value="ECO:0000314"/>
    <property type="project" value="MGI"/>
</dbReference>
<dbReference type="GO" id="GO:0050852">
    <property type="term" value="P:T cell receptor signaling pathway"/>
    <property type="evidence" value="ECO:0000250"/>
    <property type="project" value="UniProtKB"/>
</dbReference>
<dbReference type="GO" id="GO:0002224">
    <property type="term" value="P:toll-like receptor signaling pathway"/>
    <property type="evidence" value="ECO:0007669"/>
    <property type="project" value="Ensembl"/>
</dbReference>
<dbReference type="CDD" id="cd08810">
    <property type="entry name" value="CARD_BCL10"/>
    <property type="match status" value="1"/>
</dbReference>
<dbReference type="FunFam" id="1.10.533.10:FF:000022">
    <property type="entry name" value="B-cell lymphoma/leukemia 10"/>
    <property type="match status" value="1"/>
</dbReference>
<dbReference type="Gene3D" id="1.10.533.10">
    <property type="entry name" value="Death Domain, Fas"/>
    <property type="match status" value="1"/>
</dbReference>
<dbReference type="InterPro" id="IPR033238">
    <property type="entry name" value="BCL10/E10"/>
</dbReference>
<dbReference type="InterPro" id="IPR001315">
    <property type="entry name" value="CARD"/>
</dbReference>
<dbReference type="InterPro" id="IPR042143">
    <property type="entry name" value="CARD_BCL10"/>
</dbReference>
<dbReference type="InterPro" id="IPR011029">
    <property type="entry name" value="DEATH-like_dom_sf"/>
</dbReference>
<dbReference type="PANTHER" id="PTHR34920">
    <property type="entry name" value="B-CELL LYMPHOMA/LEUKEMIA 10"/>
    <property type="match status" value="1"/>
</dbReference>
<dbReference type="PANTHER" id="PTHR34920:SF1">
    <property type="entry name" value="B-CELL LYMPHOMA_LEUKEMIA 10"/>
    <property type="match status" value="1"/>
</dbReference>
<dbReference type="Pfam" id="PF00619">
    <property type="entry name" value="CARD"/>
    <property type="match status" value="1"/>
</dbReference>
<dbReference type="SUPFAM" id="SSF47986">
    <property type="entry name" value="DEATH domain"/>
    <property type="match status" value="1"/>
</dbReference>
<dbReference type="PROSITE" id="PS50209">
    <property type="entry name" value="CARD"/>
    <property type="match status" value="1"/>
</dbReference>
<evidence type="ECO:0000250" key="1">
    <source>
        <dbReference type="UniProtKB" id="O95999"/>
    </source>
</evidence>
<evidence type="ECO:0000255" key="2">
    <source>
        <dbReference type="PROSITE-ProRule" id="PRU00046"/>
    </source>
</evidence>
<evidence type="ECO:0000256" key="3">
    <source>
        <dbReference type="SAM" id="MobiDB-lite"/>
    </source>
</evidence>
<evidence type="ECO:0000269" key="4">
    <source>
    </source>
</evidence>
<evidence type="ECO:0000269" key="5">
    <source>
    </source>
</evidence>
<evidence type="ECO:0000269" key="6">
    <source>
    </source>
</evidence>
<evidence type="ECO:0000303" key="7">
    <source>
    </source>
</evidence>
<evidence type="ECO:0000303" key="8">
    <source>
    </source>
</evidence>
<evidence type="ECO:0000303" key="9">
    <source>
    </source>
</evidence>
<proteinExistence type="evidence at protein level"/>
<accession>Q9Z0H7</accession>
<accession>Q3UBN4</accession>
<reference key="1">
    <citation type="journal article" date="1999" name="Cell">
        <title>Bcl10 is involved in t(1;14)(p22;q32) of MALT B cell lymphoma and mutated in multiple tumor types.</title>
        <authorList>
            <person name="Willis T.G."/>
            <person name="Jadayel D.M."/>
            <person name="Du M.-Q."/>
            <person name="Peng H."/>
            <person name="Perry A.R."/>
            <person name="Abdul-Rauf M."/>
            <person name="Price H."/>
            <person name="Karran L."/>
            <person name="Majekodunmi O."/>
            <person name="Wlodarska I."/>
            <person name="Pan L."/>
            <person name="Crook T."/>
            <person name="Hamoudi R."/>
            <person name="Isaacson P."/>
            <person name="Dyer M.J.S."/>
        </authorList>
    </citation>
    <scope>NUCLEOTIDE SEQUENCE [MRNA]</scope>
</reference>
<reference key="2">
    <citation type="journal article" date="1999" name="J. Biol. Chem.">
        <title>CIPER, a novel NF kappaB-activating protein containing a caspase recruitment domain with homology to Herpesvirus-2 protein E10.</title>
        <authorList>
            <person name="Koseki T."/>
            <person name="Inohara N."/>
            <person name="Chen S."/>
            <person name="Carrio R."/>
            <person name="Merino J."/>
            <person name="Hottiger M.O."/>
            <person name="Nabel G.J."/>
            <person name="Nunez G."/>
        </authorList>
    </citation>
    <scope>NUCLEOTIDE SEQUENCE [MRNA]</scope>
</reference>
<reference key="3">
    <citation type="journal article" date="1999" name="J. Biol. Chem.">
        <title>Equine herpesvirus-2 E10 gene product, but not its cellular homologue, activates NF-kappaB transcription factor and c-Jun N-terminal kinase.</title>
        <authorList>
            <person name="Thome M."/>
            <person name="Martinon F."/>
            <person name="Hofmann K."/>
            <person name="Rubio V."/>
            <person name="Steiner V."/>
            <person name="Schneider P."/>
            <person name="Mattmann C."/>
            <person name="Tschopp J."/>
        </authorList>
    </citation>
    <scope>NUCLEOTIDE SEQUENCE [MRNA]</scope>
</reference>
<reference key="4">
    <citation type="journal article" date="1999" name="J. Biol. Chem.">
        <title>mE10, a novel caspase recruitment domain-containing proapoptotic molecule.</title>
        <authorList>
            <person name="Yan M."/>
            <person name="Lee J."/>
            <person name="Schilbach S."/>
            <person name="Goddard A."/>
            <person name="Dixit V.M."/>
        </authorList>
    </citation>
    <scope>NUCLEOTIDE SEQUENCE [MRNA]</scope>
    <source>
        <tissue>Embryo</tissue>
    </source>
</reference>
<reference key="5">
    <citation type="journal article" date="1999" name="J. Biol. Chem.">
        <title>CLAP, a novel caspase recruitment domain-containing protein in the tumor necrosis factor receptor pathway, regulates NF-kappaB activation and apoptosis.</title>
        <authorList>
            <person name="Srinivasula S.M."/>
            <person name="Ahmad M."/>
            <person name="Lin J.-H."/>
            <person name="Poyet J.-L."/>
            <person name="Fernandes-Alnemri T."/>
            <person name="Tsichlis P.N."/>
            <person name="Alnemri E.S."/>
        </authorList>
    </citation>
    <scope>NUCLEOTIDE SEQUENCE [MRNA]</scope>
</reference>
<reference key="6">
    <citation type="journal article" date="2005" name="Science">
        <title>The transcriptional landscape of the mammalian genome.</title>
        <authorList>
            <person name="Carninci P."/>
            <person name="Kasukawa T."/>
            <person name="Katayama S."/>
            <person name="Gough J."/>
            <person name="Frith M.C."/>
            <person name="Maeda N."/>
            <person name="Oyama R."/>
            <person name="Ravasi T."/>
            <person name="Lenhard B."/>
            <person name="Wells C."/>
            <person name="Kodzius R."/>
            <person name="Shimokawa K."/>
            <person name="Bajic V.B."/>
            <person name="Brenner S.E."/>
            <person name="Batalov S."/>
            <person name="Forrest A.R."/>
            <person name="Zavolan M."/>
            <person name="Davis M.J."/>
            <person name="Wilming L.G."/>
            <person name="Aidinis V."/>
            <person name="Allen J.E."/>
            <person name="Ambesi-Impiombato A."/>
            <person name="Apweiler R."/>
            <person name="Aturaliya R.N."/>
            <person name="Bailey T.L."/>
            <person name="Bansal M."/>
            <person name="Baxter L."/>
            <person name="Beisel K.W."/>
            <person name="Bersano T."/>
            <person name="Bono H."/>
            <person name="Chalk A.M."/>
            <person name="Chiu K.P."/>
            <person name="Choudhary V."/>
            <person name="Christoffels A."/>
            <person name="Clutterbuck D.R."/>
            <person name="Crowe M.L."/>
            <person name="Dalla E."/>
            <person name="Dalrymple B.P."/>
            <person name="de Bono B."/>
            <person name="Della Gatta G."/>
            <person name="di Bernardo D."/>
            <person name="Down T."/>
            <person name="Engstrom P."/>
            <person name="Fagiolini M."/>
            <person name="Faulkner G."/>
            <person name="Fletcher C.F."/>
            <person name="Fukushima T."/>
            <person name="Furuno M."/>
            <person name="Futaki S."/>
            <person name="Gariboldi M."/>
            <person name="Georgii-Hemming P."/>
            <person name="Gingeras T.R."/>
            <person name="Gojobori T."/>
            <person name="Green R.E."/>
            <person name="Gustincich S."/>
            <person name="Harbers M."/>
            <person name="Hayashi Y."/>
            <person name="Hensch T.K."/>
            <person name="Hirokawa N."/>
            <person name="Hill D."/>
            <person name="Huminiecki L."/>
            <person name="Iacono M."/>
            <person name="Ikeo K."/>
            <person name="Iwama A."/>
            <person name="Ishikawa T."/>
            <person name="Jakt M."/>
            <person name="Kanapin A."/>
            <person name="Katoh M."/>
            <person name="Kawasawa Y."/>
            <person name="Kelso J."/>
            <person name="Kitamura H."/>
            <person name="Kitano H."/>
            <person name="Kollias G."/>
            <person name="Krishnan S.P."/>
            <person name="Kruger A."/>
            <person name="Kummerfeld S.K."/>
            <person name="Kurochkin I.V."/>
            <person name="Lareau L.F."/>
            <person name="Lazarevic D."/>
            <person name="Lipovich L."/>
            <person name="Liu J."/>
            <person name="Liuni S."/>
            <person name="McWilliam S."/>
            <person name="Madan Babu M."/>
            <person name="Madera M."/>
            <person name="Marchionni L."/>
            <person name="Matsuda H."/>
            <person name="Matsuzawa S."/>
            <person name="Miki H."/>
            <person name="Mignone F."/>
            <person name="Miyake S."/>
            <person name="Morris K."/>
            <person name="Mottagui-Tabar S."/>
            <person name="Mulder N."/>
            <person name="Nakano N."/>
            <person name="Nakauchi H."/>
            <person name="Ng P."/>
            <person name="Nilsson R."/>
            <person name="Nishiguchi S."/>
            <person name="Nishikawa S."/>
            <person name="Nori F."/>
            <person name="Ohara O."/>
            <person name="Okazaki Y."/>
            <person name="Orlando V."/>
            <person name="Pang K.C."/>
            <person name="Pavan W.J."/>
            <person name="Pavesi G."/>
            <person name="Pesole G."/>
            <person name="Petrovsky N."/>
            <person name="Piazza S."/>
            <person name="Reed J."/>
            <person name="Reid J.F."/>
            <person name="Ring B.Z."/>
            <person name="Ringwald M."/>
            <person name="Rost B."/>
            <person name="Ruan Y."/>
            <person name="Salzberg S.L."/>
            <person name="Sandelin A."/>
            <person name="Schneider C."/>
            <person name="Schoenbach C."/>
            <person name="Sekiguchi K."/>
            <person name="Semple C.A."/>
            <person name="Seno S."/>
            <person name="Sessa L."/>
            <person name="Sheng Y."/>
            <person name="Shibata Y."/>
            <person name="Shimada H."/>
            <person name="Shimada K."/>
            <person name="Silva D."/>
            <person name="Sinclair B."/>
            <person name="Sperling S."/>
            <person name="Stupka E."/>
            <person name="Sugiura K."/>
            <person name="Sultana R."/>
            <person name="Takenaka Y."/>
            <person name="Taki K."/>
            <person name="Tammoja K."/>
            <person name="Tan S.L."/>
            <person name="Tang S."/>
            <person name="Taylor M.S."/>
            <person name="Tegner J."/>
            <person name="Teichmann S.A."/>
            <person name="Ueda H.R."/>
            <person name="van Nimwegen E."/>
            <person name="Verardo R."/>
            <person name="Wei C.L."/>
            <person name="Yagi K."/>
            <person name="Yamanishi H."/>
            <person name="Zabarovsky E."/>
            <person name="Zhu S."/>
            <person name="Zimmer A."/>
            <person name="Hide W."/>
            <person name="Bult C."/>
            <person name="Grimmond S.M."/>
            <person name="Teasdale R.D."/>
            <person name="Liu E.T."/>
            <person name="Brusic V."/>
            <person name="Quackenbush J."/>
            <person name="Wahlestedt C."/>
            <person name="Mattick J.S."/>
            <person name="Hume D.A."/>
            <person name="Kai C."/>
            <person name="Sasaki D."/>
            <person name="Tomaru Y."/>
            <person name="Fukuda S."/>
            <person name="Kanamori-Katayama M."/>
            <person name="Suzuki M."/>
            <person name="Aoki J."/>
            <person name="Arakawa T."/>
            <person name="Iida J."/>
            <person name="Imamura K."/>
            <person name="Itoh M."/>
            <person name="Kato T."/>
            <person name="Kawaji H."/>
            <person name="Kawagashira N."/>
            <person name="Kawashima T."/>
            <person name="Kojima M."/>
            <person name="Kondo S."/>
            <person name="Konno H."/>
            <person name="Nakano K."/>
            <person name="Ninomiya N."/>
            <person name="Nishio T."/>
            <person name="Okada M."/>
            <person name="Plessy C."/>
            <person name="Shibata K."/>
            <person name="Shiraki T."/>
            <person name="Suzuki S."/>
            <person name="Tagami M."/>
            <person name="Waki K."/>
            <person name="Watahiki A."/>
            <person name="Okamura-Oho Y."/>
            <person name="Suzuki H."/>
            <person name="Kawai J."/>
            <person name="Hayashizaki Y."/>
        </authorList>
    </citation>
    <scope>NUCLEOTIDE SEQUENCE [LARGE SCALE MRNA]</scope>
    <source>
        <strain>C57BL/6J</strain>
        <strain>NOD</strain>
        <tissue>Bone marrow</tissue>
        <tissue>Corpora quadrigemina</tissue>
        <tissue>Liver</tissue>
        <tissue>Spleen</tissue>
    </source>
</reference>
<reference key="7">
    <citation type="journal article" date="2004" name="Genome Res.">
        <title>The status, quality, and expansion of the NIH full-length cDNA project: the Mammalian Gene Collection (MGC).</title>
        <authorList>
            <consortium name="The MGC Project Team"/>
        </authorList>
    </citation>
    <scope>NUCLEOTIDE SEQUENCE [LARGE SCALE MRNA]</scope>
</reference>
<reference key="8">
    <citation type="journal article" date="2004" name="J. Biol. Chem.">
        <title>BCL10 mediates lipopolysaccharide/toll-like receptor-4 signaling through interaction with Pellino2.</title>
        <authorList>
            <person name="Liu Y."/>
            <person name="Dong W."/>
            <person name="Chen L."/>
            <person name="Xiang R."/>
            <person name="Xiao H."/>
            <person name="De G."/>
            <person name="Wang Z."/>
            <person name="Qi Y."/>
        </authorList>
    </citation>
    <scope>INTERACTION WITH PELI2 AND SOCS3</scope>
</reference>
<reference key="9">
    <citation type="journal article" date="2010" name="Cell">
        <title>A tissue-specific atlas of mouse protein phosphorylation and expression.</title>
        <authorList>
            <person name="Huttlin E.L."/>
            <person name="Jedrychowski M.P."/>
            <person name="Elias J.E."/>
            <person name="Goswami T."/>
            <person name="Rad R."/>
            <person name="Beausoleil S.A."/>
            <person name="Villen J."/>
            <person name="Haas W."/>
            <person name="Sowa M.E."/>
            <person name="Gygi S.P."/>
        </authorList>
    </citation>
    <scope>IDENTIFICATION BY MASS SPECTROMETRY [LARGE SCALE ANALYSIS]</scope>
    <source>
        <tissue>Kidney</tissue>
        <tissue>Spleen</tissue>
    </source>
</reference>
<reference key="10">
    <citation type="journal article" date="2012" name="Immunity">
        <title>Syk kinase-coupled C-type lectin receptors engage protein kinase C-delta to elicit Card9 adaptor-mediated innate immunity.</title>
        <authorList>
            <person name="Strasser D."/>
            <person name="Neumann K."/>
            <person name="Bergmann H."/>
            <person name="Marakalala M.J."/>
            <person name="Guler R."/>
            <person name="Rojowska A."/>
            <person name="Hopfner K.P."/>
            <person name="Brombacher F."/>
            <person name="Urlaub H."/>
            <person name="Baier G."/>
            <person name="Brown G.D."/>
            <person name="Leitges M."/>
            <person name="Ruland J."/>
        </authorList>
    </citation>
    <scope>FUNCTION</scope>
    <scope>INTERACTION WITH CARD9</scope>
</reference>
<reference key="11">
    <citation type="journal article" date="2012" name="PLoS ONE">
        <title>Structural insights into the assembly of CARMA1 and BCL10.</title>
        <authorList>
            <person name="Li S."/>
            <person name="Yang X."/>
            <person name="Shao J."/>
            <person name="Shen Y."/>
        </authorList>
    </citation>
    <scope>INTERACTION WITH CARD11</scope>
    <scope>MUTAGENESIS OF GLU-50; GLU-53 AND GLU-54</scope>
</reference>
<keyword id="KW-0007">Acetylation</keyword>
<keyword id="KW-1064">Adaptive immunity</keyword>
<keyword id="KW-0053">Apoptosis</keyword>
<keyword id="KW-0963">Cytoplasm</keyword>
<keyword id="KW-0391">Immunity</keyword>
<keyword id="KW-0399">Innate immunity</keyword>
<keyword id="KW-1017">Isopeptide bond</keyword>
<keyword id="KW-0472">Membrane</keyword>
<keyword id="KW-0597">Phosphoprotein</keyword>
<keyword id="KW-1185">Reference proteome</keyword>
<keyword id="KW-0043">Tumor suppressor</keyword>
<keyword id="KW-0832">Ubl conjugation</keyword>
<name>BCL10_MOUSE</name>
<feature type="chain" id="PRO_0000144075" description="B-cell lymphoma/leukemia 10">
    <location>
        <begin position="1"/>
        <end position="233"/>
    </location>
</feature>
<feature type="domain" description="CARD" evidence="2">
    <location>
        <begin position="13"/>
        <end position="101"/>
    </location>
</feature>
<feature type="region of interest" description="Disordered" evidence="3">
    <location>
        <begin position="185"/>
        <end position="233"/>
    </location>
</feature>
<feature type="compositionally biased region" description="Pro residues" evidence="3">
    <location>
        <begin position="195"/>
        <end position="205"/>
    </location>
</feature>
<feature type="site" description="Cleavage; by MALT1" evidence="1">
    <location>
        <begin position="228"/>
        <end position="229"/>
    </location>
</feature>
<feature type="modified residue" description="N-acetylmethionine" evidence="1">
    <location>
        <position position="1"/>
    </location>
</feature>
<feature type="modified residue" description="Phosphoserine" evidence="1">
    <location>
        <position position="138"/>
    </location>
</feature>
<feature type="cross-link" description="Glycyl lysine isopeptide (Lys-Gly) (interchain with G-Cter in ubiquitin)" evidence="1">
    <location>
        <position position="17"/>
    </location>
</feature>
<feature type="cross-link" description="Glycyl lysine isopeptide (Lys-Gly) (interchain with G-Cter in ubiquitin)" evidence="1">
    <location>
        <position position="31"/>
    </location>
</feature>
<feature type="cross-link" description="Glycyl lysine isopeptide (Lys-Gly) (interchain with G-Cter in ubiquitin)" evidence="1">
    <location>
        <position position="63"/>
    </location>
</feature>
<feature type="mutagenesis site" description="Decreased interaction with CARD11." evidence="6">
    <original>E</original>
    <variation>A</variation>
    <location>
        <position position="50"/>
    </location>
</feature>
<feature type="mutagenesis site" description="Decreased interaction with CARD11." evidence="6">
    <original>E</original>
    <variation>A</variation>
    <location>
        <position position="53"/>
    </location>
</feature>
<feature type="mutagenesis site" description="Decreased interaction with CARD11." evidence="6">
    <original>E</original>
    <variation>A</variation>
    <location>
        <position position="54"/>
    </location>
</feature>
<gene>
    <name type="primary">Bcl10</name>
    <name evidence="7" type="synonym">Ciper</name>
    <name evidence="9" type="synonym">Clap</name>
</gene>
<sequence>MEAPAPSLTEEDLTEVKKDALENLRVYLCEKIIAERHFDHLRAKKILSREDTEEISCRTSSRKRAGKLLDYLQENPRGLDTLVESIRREKTQSFLIQKITDEVLKLRNIKLEHLKGLKCSSCEPFAAGATNNLSRCNSDESNLSEKQRASTVMYHPEGESSTAPFFSMASSLNLPVLEVGRTENSSFSSATLPRPGDPGAPPLPPDLRLEEGGSCGNSSEMFLPLRSRALSRQ</sequence>